<feature type="chain" id="PRO_0000309048" description="Putative uncharacterized protein YLR154W-F">
    <location>
        <begin position="1"/>
        <end position="46"/>
    </location>
</feature>
<sequence length="46" mass="5109">MLLPKQKNPFSKLLNFFNDPSAGSPTETLLRLLVPLNDQVCPNSPL</sequence>
<proteinExistence type="uncertain"/>
<evidence type="ECO:0000305" key="1"/>
<evidence type="ECO:0000305" key="2">
    <source>
    </source>
</evidence>
<organism>
    <name type="scientific">Saccharomyces cerevisiae (strain ATCC 204508 / S288c)</name>
    <name type="common">Baker's yeast</name>
    <dbReference type="NCBI Taxonomy" id="559292"/>
    <lineage>
        <taxon>Eukaryota</taxon>
        <taxon>Fungi</taxon>
        <taxon>Dikarya</taxon>
        <taxon>Ascomycota</taxon>
        <taxon>Saccharomycotina</taxon>
        <taxon>Saccharomycetes</taxon>
        <taxon>Saccharomycetales</taxon>
        <taxon>Saccharomycetaceae</taxon>
        <taxon>Saccharomyces</taxon>
    </lineage>
</organism>
<protein>
    <recommendedName>
        <fullName>Putative uncharacterized protein YLR154W-F</fullName>
    </recommendedName>
</protein>
<gene>
    <name type="ordered locus">YLR154W-F</name>
</gene>
<name>YL54F_YEAST</name>
<reference key="1">
    <citation type="journal article" date="1997" name="Nature">
        <title>The nucleotide sequence of Saccharomyces cerevisiae chromosome XII.</title>
        <authorList>
            <person name="Johnston M."/>
            <person name="Hillier L.W."/>
            <person name="Riles L."/>
            <person name="Albermann K."/>
            <person name="Andre B."/>
            <person name="Ansorge W."/>
            <person name="Benes V."/>
            <person name="Brueckner M."/>
            <person name="Delius H."/>
            <person name="Dubois E."/>
            <person name="Duesterhoeft A."/>
            <person name="Entian K.-D."/>
            <person name="Floeth M."/>
            <person name="Goffeau A."/>
            <person name="Hebling U."/>
            <person name="Heumann K."/>
            <person name="Heuss-Neitzel D."/>
            <person name="Hilbert H."/>
            <person name="Hilger F."/>
            <person name="Kleine K."/>
            <person name="Koetter P."/>
            <person name="Louis E.J."/>
            <person name="Messenguy F."/>
            <person name="Mewes H.-W."/>
            <person name="Miosga T."/>
            <person name="Moestl D."/>
            <person name="Mueller-Auer S."/>
            <person name="Nentwich U."/>
            <person name="Obermaier B."/>
            <person name="Piravandi E."/>
            <person name="Pohl T.M."/>
            <person name="Portetelle D."/>
            <person name="Purnelle B."/>
            <person name="Rechmann S."/>
            <person name="Rieger M."/>
            <person name="Rinke M."/>
            <person name="Rose M."/>
            <person name="Scharfe M."/>
            <person name="Scherens B."/>
            <person name="Scholler P."/>
            <person name="Schwager C."/>
            <person name="Schwarz S."/>
            <person name="Underwood A.P."/>
            <person name="Urrestarazu L.A."/>
            <person name="Vandenbol M."/>
            <person name="Verhasselt P."/>
            <person name="Vierendeels F."/>
            <person name="Voet M."/>
            <person name="Volckaert G."/>
            <person name="Voss H."/>
            <person name="Wambutt R."/>
            <person name="Wedler E."/>
            <person name="Wedler H."/>
            <person name="Zimmermann F.K."/>
            <person name="Zollner A."/>
            <person name="Hani J."/>
            <person name="Hoheisel J.D."/>
        </authorList>
    </citation>
    <scope>NUCLEOTIDE SEQUENCE [LARGE SCALE GENOMIC DNA]</scope>
    <source>
        <strain>ATCC 204508 / S288c</strain>
    </source>
</reference>
<reference key="2">
    <citation type="journal article" date="2014" name="G3 (Bethesda)">
        <title>The reference genome sequence of Saccharomyces cerevisiae: Then and now.</title>
        <authorList>
            <person name="Engel S.R."/>
            <person name="Dietrich F.S."/>
            <person name="Fisk D.G."/>
            <person name="Binkley G."/>
            <person name="Balakrishnan R."/>
            <person name="Costanzo M.C."/>
            <person name="Dwight S.S."/>
            <person name="Hitz B.C."/>
            <person name="Karra K."/>
            <person name="Nash R.S."/>
            <person name="Weng S."/>
            <person name="Wong E.D."/>
            <person name="Lloyd P."/>
            <person name="Skrzypek M.S."/>
            <person name="Miyasato S.R."/>
            <person name="Simison M."/>
            <person name="Cherry J.M."/>
        </authorList>
    </citation>
    <scope>GENOME REANNOTATION</scope>
    <source>
        <strain>ATCC 204508 / S288c</strain>
    </source>
</reference>
<reference key="3">
    <citation type="journal article" date="2002" name="Genome Res.">
        <title>Parallel identification of new genes in Saccharomyces cerevisiae.</title>
        <authorList>
            <person name="Oshiro G."/>
            <person name="Wodicka L.M."/>
            <person name="Washburn M.P."/>
            <person name="Yates J.R. III"/>
            <person name="Lockhart D.J."/>
            <person name="Winzeler E.A."/>
        </authorList>
    </citation>
    <scope>GENOME REANNOTATION</scope>
</reference>
<accession>P0C5Q0</accession>
<dbReference type="EMBL" id="U53879">
    <property type="status" value="NOT_ANNOTATED_CDS"/>
    <property type="molecule type" value="Genomic_DNA"/>
</dbReference>
<dbReference type="EMBL" id="Z73326">
    <property type="status" value="NOT_ANNOTATED_CDS"/>
    <property type="molecule type" value="Genomic_DNA"/>
</dbReference>
<dbReference type="STRING" id="4932.YLR154W-F"/>
<dbReference type="PaxDb" id="4932-YLR154W-F"/>
<dbReference type="EnsemblFungi" id="YLR154W-F_mRNA">
    <property type="protein sequence ID" value="YLR154W-F"/>
    <property type="gene ID" value="YLR154W-F"/>
</dbReference>
<dbReference type="AGR" id="SGD:S000028843"/>
<dbReference type="SGD" id="S000028843">
    <property type="gene designation" value="YLR154W-F"/>
</dbReference>
<dbReference type="HOGENOM" id="CLU_3191583_0_0_1"/>
<comment type="miscellaneous">
    <text evidence="1">Completely overlaps the 35S rRNA gene.</text>
</comment>
<comment type="caution">
    <text evidence="2">Product of a dubious gene prediction unlikely to encode a functional protein. Because of that it is not part of the S.cerevisiae S288c complete/reference proteome set.</text>
</comment>